<evidence type="ECO:0000250" key="1">
    <source>
        <dbReference type="UniProtKB" id="P54307"/>
    </source>
</evidence>
<evidence type="ECO:0000305" key="2"/>
<keyword id="KW-0238">DNA-binding</keyword>
<keyword id="KW-0231">Viral genome packaging</keyword>
<keyword id="KW-1188">Viral release from host cell</keyword>
<comment type="function">
    <text evidence="1">The terminase small subunit specifically recognizes the non-adjacent pacL and pacR packaging subsites and regulates the ATPase activity of the terminase large subunit. The terminase lies at a unique vertex of the procapsid and is composed of two subunits, a small terminase subunit involved in viral DNA recognition (packaging 'pac' sequence), and a large terminase subunit possessing endonucleolytic and ATPase activities. Both terminase subunits heterooligomerize and are docked on the portal protein to form the packaging machine. The terminase large subunit exhibits endonuclease activity and cleaves the viral genome concatemer once the capsid is full (headful packaging). Once the capsid is packaged with the DNA, the terminase complex is substituted by neck proteins.</text>
</comment>
<comment type="subunit">
    <text evidence="1">Homodecamer. Interacts with the terminase large subunit gp2; the active complex is probably composed of a one monomer of gp2 and two or more decamers of gp1.</text>
</comment>
<comment type="domain">
    <text evidence="1">The N-terminus contains a helix-turn-helix (HTH) doamin that is involved in viral DNA binding.</text>
</comment>
<comment type="similarity">
    <text evidence="2">Belongs to the SPP1-like small terminase family.</text>
</comment>
<gene>
    <name type="primary">1</name>
</gene>
<organism>
    <name type="scientific">Bacillus phage rho15</name>
    <name type="common">Bacteriophage rho-15</name>
    <dbReference type="NCBI Taxonomy" id="36451"/>
    <lineage>
        <taxon>Viruses</taxon>
        <taxon>Duplodnaviria</taxon>
        <taxon>Heunggongvirae</taxon>
        <taxon>Uroviricota</taxon>
        <taxon>Caudoviricetes</taxon>
    </lineage>
</organism>
<protein>
    <recommendedName>
        <fullName>Terminase small subunit</fullName>
    </recommendedName>
    <alternativeName>
        <fullName>G1P</fullName>
    </alternativeName>
</protein>
<organismHost>
    <name type="scientific">Bacillus subtilis</name>
    <dbReference type="NCBI Taxonomy" id="1423"/>
</organismHost>
<accession>P68929</accession>
<accession>Q38627</accession>
<reference key="1">
    <citation type="journal article" date="1994" name="Virology">
        <title>Analysis of the Bacillus subtilis bacteriophages SPP1 and SF6 gene 1 product: a protein involved in the initiation of headful packaging.</title>
        <authorList>
            <person name="Chai S."/>
            <person name="Kruft V."/>
            <person name="Alonso J.C."/>
        </authorList>
    </citation>
    <scope>NUCLEOTIDE SEQUENCE [GENOMIC DNA]</scope>
</reference>
<feature type="chain" id="PRO_0000077791" description="Terminase small subunit">
    <location>
        <begin position="1"/>
        <end position="145"/>
    </location>
</feature>
<feature type="region of interest" description="Helix-turn-helix (HTH)" evidence="1">
    <location>
        <begin position="23"/>
        <end position="48"/>
    </location>
</feature>
<dbReference type="EMBL" id="X67298">
    <property type="protein sequence ID" value="CAA47712.1"/>
    <property type="status" value="ALT_SEQ"/>
    <property type="molecule type" value="Genomic_DNA"/>
</dbReference>
<dbReference type="SMR" id="P68929"/>
<dbReference type="GO" id="GO:0003677">
    <property type="term" value="F:DNA binding"/>
    <property type="evidence" value="ECO:0007669"/>
    <property type="project" value="UniProtKB-KW"/>
</dbReference>
<dbReference type="GO" id="GO:0051276">
    <property type="term" value="P:chromosome organization"/>
    <property type="evidence" value="ECO:0007669"/>
    <property type="project" value="InterPro"/>
</dbReference>
<dbReference type="Gene3D" id="6.10.140.2160">
    <property type="match status" value="1"/>
</dbReference>
<dbReference type="Gene3D" id="1.10.10.1400">
    <property type="entry name" value="Terminase, small subunit, N-terminal DNA-binding domain, HTH motif"/>
    <property type="match status" value="1"/>
</dbReference>
<dbReference type="InterPro" id="IPR052404">
    <property type="entry name" value="SPP1-like_terminase"/>
</dbReference>
<dbReference type="InterPro" id="IPR038713">
    <property type="entry name" value="Terminase_Gp1_N_sf"/>
</dbReference>
<dbReference type="InterPro" id="IPR005335">
    <property type="entry name" value="Terminase_ssu"/>
</dbReference>
<dbReference type="PANTHER" id="PTHR41328:SF2">
    <property type="entry name" value="TERMINASE SMALL SUBUNIT"/>
    <property type="match status" value="1"/>
</dbReference>
<dbReference type="PANTHER" id="PTHR41328">
    <property type="entry name" value="TERMINASE SMALL SUBUNIT-RELATED"/>
    <property type="match status" value="1"/>
</dbReference>
<dbReference type="Pfam" id="PF03592">
    <property type="entry name" value="Terminase_2"/>
    <property type="match status" value="1"/>
</dbReference>
<name>TERS_BPRH5</name>
<proteinExistence type="inferred from homology"/>
<sequence length="145" mass="16010">MKEPKLSPKQERFIEEYFINDMNATKAAIAAGYSKNSASAIGAENLQKPAIRARIDARLKEINEKKILQANEVLEHLTRIALGQEKEQVLMGIGKGAETKTHVEVSAKDRIKALELLGKAHAVFTDKQKVETNQVIIVDDSGDAE</sequence>